<reference key="1">
    <citation type="journal article" date="2004" name="Proc. Natl. Acad. Sci. U.S.A.">
        <title>Comparison of the genome of the oral pathogen Treponema denticola with other spirochete genomes.</title>
        <authorList>
            <person name="Seshadri R."/>
            <person name="Myers G.S.A."/>
            <person name="Tettelin H."/>
            <person name="Eisen J.A."/>
            <person name="Heidelberg J.F."/>
            <person name="Dodson R.J."/>
            <person name="Davidsen T.M."/>
            <person name="DeBoy R.T."/>
            <person name="Fouts D.E."/>
            <person name="Haft D.H."/>
            <person name="Selengut J."/>
            <person name="Ren Q."/>
            <person name="Brinkac L.M."/>
            <person name="Madupu R."/>
            <person name="Kolonay J.F."/>
            <person name="Durkin S.A."/>
            <person name="Daugherty S.C."/>
            <person name="Shetty J."/>
            <person name="Shvartsbeyn A."/>
            <person name="Gebregeorgis E."/>
            <person name="Geer K."/>
            <person name="Tsegaye G."/>
            <person name="Malek J.A."/>
            <person name="Ayodeji B."/>
            <person name="Shatsman S."/>
            <person name="McLeod M.P."/>
            <person name="Smajs D."/>
            <person name="Howell J.K."/>
            <person name="Pal S."/>
            <person name="Amin A."/>
            <person name="Vashisth P."/>
            <person name="McNeill T.Z."/>
            <person name="Xiang Q."/>
            <person name="Sodergren E."/>
            <person name="Baca E."/>
            <person name="Weinstock G.M."/>
            <person name="Norris S.J."/>
            <person name="Fraser C.M."/>
            <person name="Paulsen I.T."/>
        </authorList>
    </citation>
    <scope>NUCLEOTIDE SEQUENCE [LARGE SCALE GENOMIC DNA]</scope>
    <source>
        <strain>ATCC 35405 / DSM 14222 / CIP 103919 / JCM 8153 / KCTC 15104</strain>
    </source>
</reference>
<accession>Q73N15</accession>
<feature type="chain" id="PRO_0000181795" description="tRNA(Ile)-lysidine synthase">
    <location>
        <begin position="1"/>
        <end position="460"/>
    </location>
</feature>
<feature type="binding site" evidence="1">
    <location>
        <begin position="37"/>
        <end position="42"/>
    </location>
    <ligand>
        <name>ATP</name>
        <dbReference type="ChEBI" id="CHEBI:30616"/>
    </ligand>
</feature>
<organism>
    <name type="scientific">Treponema denticola (strain ATCC 35405 / DSM 14222 / CIP 103919 / JCM 8153 / KCTC 15104)</name>
    <dbReference type="NCBI Taxonomy" id="243275"/>
    <lineage>
        <taxon>Bacteria</taxon>
        <taxon>Pseudomonadati</taxon>
        <taxon>Spirochaetota</taxon>
        <taxon>Spirochaetia</taxon>
        <taxon>Spirochaetales</taxon>
        <taxon>Treponemataceae</taxon>
        <taxon>Treponema</taxon>
    </lineage>
</organism>
<protein>
    <recommendedName>
        <fullName evidence="1">tRNA(Ile)-lysidine synthase</fullName>
        <ecNumber evidence="1">6.3.4.19</ecNumber>
    </recommendedName>
    <alternativeName>
        <fullName evidence="1">tRNA(Ile)-2-lysyl-cytidine synthase</fullName>
    </alternativeName>
    <alternativeName>
        <fullName evidence="1">tRNA(Ile)-lysidine synthetase</fullName>
    </alternativeName>
</protein>
<evidence type="ECO:0000255" key="1">
    <source>
        <dbReference type="HAMAP-Rule" id="MF_01161"/>
    </source>
</evidence>
<sequence>MCKIYLMAKSFLKDVLLGFSSLCDRTAAPLRLLLAVSGGADSMAMLSAFLELKSDINAEIFVLTVNHNIRPEKETLGDAQFVLDFCNDKCPCILAEIPKNTVFDEAKNRKTGIEDAARFLRYNEFEKAADSLNADYILTAHNKNDNYETVLMRLFQGSEPEALMGISPRRGRFIRPMLNISRSEIEEYLKEKNIPWREDATNLEASYLRNKVRHNLLPVLSICFDGWQSGLDKSLAKIKAQNDFVIASYKTKKEEWVLDKKEDCCRCKFLFFLSLDEALKLKFLQEGLILLKGKRRIPYSVFDDLMKLSDTKKIIFSGGFCIKKEGDEVLLFKAVTEEKTSEVFYSIWIDKPCSFDTPAGNFKALENDDGFFIVHESDKTCGIGPFKPPFCVRSRLFGDEIETSSGSKKSVKKIINEWNIDYENRNILPIIEEGGVVKGIYGAVFGKKNWYVVGDLGVKR</sequence>
<comment type="function">
    <text evidence="1">Ligates lysine onto the cytidine present at position 34 of the AUA codon-specific tRNA(Ile) that contains the anticodon CAU, in an ATP-dependent manner. Cytidine is converted to lysidine, thus changing the amino acid specificity of the tRNA from methionine to isoleucine.</text>
</comment>
<comment type="catalytic activity">
    <reaction evidence="1">
        <text>cytidine(34) in tRNA(Ile2) + L-lysine + ATP = lysidine(34) in tRNA(Ile2) + AMP + diphosphate + H(+)</text>
        <dbReference type="Rhea" id="RHEA:43744"/>
        <dbReference type="Rhea" id="RHEA-COMP:10625"/>
        <dbReference type="Rhea" id="RHEA-COMP:10670"/>
        <dbReference type="ChEBI" id="CHEBI:15378"/>
        <dbReference type="ChEBI" id="CHEBI:30616"/>
        <dbReference type="ChEBI" id="CHEBI:32551"/>
        <dbReference type="ChEBI" id="CHEBI:33019"/>
        <dbReference type="ChEBI" id="CHEBI:82748"/>
        <dbReference type="ChEBI" id="CHEBI:83665"/>
        <dbReference type="ChEBI" id="CHEBI:456215"/>
        <dbReference type="EC" id="6.3.4.19"/>
    </reaction>
</comment>
<comment type="subcellular location">
    <subcellularLocation>
        <location evidence="1">Cytoplasm</location>
    </subcellularLocation>
</comment>
<comment type="domain">
    <text>The N-terminal region contains the highly conserved SGGXDS motif, predicted to be a P-loop motif involved in ATP binding.</text>
</comment>
<comment type="similarity">
    <text evidence="1">Belongs to the tRNA(Ile)-lysidine synthase family.</text>
</comment>
<dbReference type="EC" id="6.3.4.19" evidence="1"/>
<dbReference type="EMBL" id="AE017226">
    <property type="protein sequence ID" value="AAS11858.1"/>
    <property type="molecule type" value="Genomic_DNA"/>
</dbReference>
<dbReference type="RefSeq" id="NP_971947.1">
    <property type="nucleotide sequence ID" value="NC_002967.9"/>
</dbReference>
<dbReference type="SMR" id="Q73N15"/>
<dbReference type="STRING" id="243275.TDE_1341"/>
<dbReference type="PaxDb" id="243275-TDE_1341"/>
<dbReference type="KEGG" id="tde:TDE_1341"/>
<dbReference type="PATRIC" id="fig|243275.7.peg.1289"/>
<dbReference type="eggNOG" id="COG0037">
    <property type="taxonomic scope" value="Bacteria"/>
</dbReference>
<dbReference type="HOGENOM" id="CLU_018869_0_1_12"/>
<dbReference type="OrthoDB" id="9807403at2"/>
<dbReference type="Proteomes" id="UP000008212">
    <property type="component" value="Chromosome"/>
</dbReference>
<dbReference type="GO" id="GO:0005737">
    <property type="term" value="C:cytoplasm"/>
    <property type="evidence" value="ECO:0007669"/>
    <property type="project" value="UniProtKB-SubCell"/>
</dbReference>
<dbReference type="GO" id="GO:0005524">
    <property type="term" value="F:ATP binding"/>
    <property type="evidence" value="ECO:0007669"/>
    <property type="project" value="UniProtKB-UniRule"/>
</dbReference>
<dbReference type="GO" id="GO:0032267">
    <property type="term" value="F:tRNA(Ile)-lysidine synthase activity"/>
    <property type="evidence" value="ECO:0007669"/>
    <property type="project" value="UniProtKB-EC"/>
</dbReference>
<dbReference type="GO" id="GO:0006400">
    <property type="term" value="P:tRNA modification"/>
    <property type="evidence" value="ECO:0007669"/>
    <property type="project" value="UniProtKB-UniRule"/>
</dbReference>
<dbReference type="CDD" id="cd01992">
    <property type="entry name" value="TilS_N"/>
    <property type="match status" value="1"/>
</dbReference>
<dbReference type="Gene3D" id="3.40.50.620">
    <property type="entry name" value="HUPs"/>
    <property type="match status" value="1"/>
</dbReference>
<dbReference type="HAMAP" id="MF_01161">
    <property type="entry name" value="tRNA_Ile_lys_synt"/>
    <property type="match status" value="1"/>
</dbReference>
<dbReference type="InterPro" id="IPR012796">
    <property type="entry name" value="Lysidine-tRNA-synth_C"/>
</dbReference>
<dbReference type="InterPro" id="IPR014729">
    <property type="entry name" value="Rossmann-like_a/b/a_fold"/>
</dbReference>
<dbReference type="InterPro" id="IPR011063">
    <property type="entry name" value="TilS/TtcA_N"/>
</dbReference>
<dbReference type="InterPro" id="IPR012094">
    <property type="entry name" value="tRNA_Ile_lys_synt"/>
</dbReference>
<dbReference type="InterPro" id="IPR012795">
    <property type="entry name" value="tRNA_Ile_lys_synt_N"/>
</dbReference>
<dbReference type="NCBIfam" id="TIGR02433">
    <property type="entry name" value="lysidine_TilS_C"/>
    <property type="match status" value="1"/>
</dbReference>
<dbReference type="NCBIfam" id="TIGR02432">
    <property type="entry name" value="lysidine_TilS_N"/>
    <property type="match status" value="1"/>
</dbReference>
<dbReference type="PANTHER" id="PTHR43033">
    <property type="entry name" value="TRNA(ILE)-LYSIDINE SYNTHASE-RELATED"/>
    <property type="match status" value="1"/>
</dbReference>
<dbReference type="PANTHER" id="PTHR43033:SF1">
    <property type="entry name" value="TRNA(ILE)-LYSIDINE SYNTHASE-RELATED"/>
    <property type="match status" value="1"/>
</dbReference>
<dbReference type="Pfam" id="PF01171">
    <property type="entry name" value="ATP_bind_3"/>
    <property type="match status" value="1"/>
</dbReference>
<dbReference type="SUPFAM" id="SSF52402">
    <property type="entry name" value="Adenine nucleotide alpha hydrolases-like"/>
    <property type="match status" value="1"/>
</dbReference>
<dbReference type="SUPFAM" id="SSF56037">
    <property type="entry name" value="PheT/TilS domain"/>
    <property type="match status" value="1"/>
</dbReference>
<proteinExistence type="inferred from homology"/>
<gene>
    <name evidence="1" type="primary">tilS</name>
    <name type="ordered locus">TDE_1341</name>
</gene>
<keyword id="KW-0067">ATP-binding</keyword>
<keyword id="KW-0963">Cytoplasm</keyword>
<keyword id="KW-0436">Ligase</keyword>
<keyword id="KW-0547">Nucleotide-binding</keyword>
<keyword id="KW-1185">Reference proteome</keyword>
<keyword id="KW-0819">tRNA processing</keyword>
<name>TILS_TREDE</name>